<proteinExistence type="evidence at protein level"/>
<comment type="function">
    <text evidence="5 7 8 11 12">High affinity abscisic acid (ABA) transporter that mediates the export of ABA, with a preference for (+)-ABA, through the plasma membrane, especially in vascular tissues (e.g. phloem companion cells), and is involved in the intercellular ABA signaling pathway (PubMed:20133881, PubMed:20935463, PubMed:24521878, PubMed:26517905). Together with ABCG31, export ABA from the endosperm to deliver it to the embryo via ABCG30 and ABCG40-mediated import to suppress radicle extension and subsequent embryonic growth (PubMed:26334616).</text>
</comment>
<comment type="catalytic activity">
    <reaction evidence="5 7 8">
        <text>abscisate(in) + ATP + H2O = abscisate(out) + ADP + phosphate + H(+)</text>
        <dbReference type="Rhea" id="RHEA:63932"/>
        <dbReference type="ChEBI" id="CHEBI:15377"/>
        <dbReference type="ChEBI" id="CHEBI:15378"/>
        <dbReference type="ChEBI" id="CHEBI:30616"/>
        <dbReference type="ChEBI" id="CHEBI:43474"/>
        <dbReference type="ChEBI" id="CHEBI:62432"/>
        <dbReference type="ChEBI" id="CHEBI:456216"/>
    </reaction>
    <physiologicalReaction direction="left-to-right" evidence="5 7 8">
        <dbReference type="Rhea" id="RHEA:63933"/>
    </physiologicalReaction>
</comment>
<comment type="activity regulation">
    <text evidence="5">ADP and vanadate (ABC transporters inhibitor) inhibit the ATP-dependent abscisic acid (ABA) uptake.</text>
</comment>
<comment type="biophysicochemical properties">
    <kinetics>
        <KM evidence="5">260 nM for abscisic acid (in the presence of ATP)</KM>
        <Vmax evidence="5">6.9 pmol/min/mg enzyme with abscisic acid as substrate (in the presence of ATP)</Vmax>
    </kinetics>
</comment>
<comment type="subcellular location">
    <subcellularLocation>
        <location evidence="5">Cell membrane</location>
        <topology evidence="1">Multi-pass membrane protein</topology>
    </subcellularLocation>
</comment>
<comment type="alternative products">
    <event type="alternative splicing"/>
    <isoform>
        <id>Q84TH5-1</id>
        <name>1</name>
        <sequence type="displayed"/>
    </isoform>
    <isoform>
        <id>Q84TH5-2</id>
        <name>2</name>
        <sequence type="described" ref="VSP_060644"/>
    </isoform>
</comment>
<comment type="tissue specificity">
    <text evidence="5 6 7 8">Mainly expressed in vascular tissues,predominantly in phloem companion cells, with highest levels in roots and seeds, and lower levels in seedlings, stems, leaves and flowers (PubMed:20133881, PubMed:24521878). Mostly observed in inflorescence meristems relative to cauline leaves and developing siliques (PubMed:22525244). In seeds, mainly expressed in the endosperm and, to a lesser extent, in the embryo (PubMed:26334616).</text>
</comment>
<comment type="induction">
    <text evidence="5 6">By abscisic acid (ABA) (PubMed:20133881). In cauline leaves, activated by cold stress, but repressed by heat stress (PubMed:22525244). Within inflorescence meristems, down-regulated by both cold and heat stress treatments (PubMed:22525244). In developing siliques, activated by cold stress, but unaffected by heat stress (PubMed:22525244).</text>
</comment>
<comment type="disruption phenotype">
    <text evidence="5">Hypersensitivity to abscisic acid (ABA).</text>
</comment>
<comment type="similarity">
    <text evidence="13">Belongs to the ABC transporter superfamily. ABCG family. Eye pigment precursor importer (TC 3.A.1.204) subfamily.</text>
</comment>
<comment type="sequence caution" evidence="13">
    <conflict type="erroneous gene model prediction">
        <sequence resource="EMBL-CDS" id="AAG52231"/>
    </conflict>
</comment>
<name>AB25G_ARATH</name>
<dbReference type="EMBL" id="AC021665">
    <property type="protein sequence ID" value="AAG52231.1"/>
    <property type="status" value="ALT_SEQ"/>
    <property type="molecule type" value="Genomic_DNA"/>
</dbReference>
<dbReference type="EMBL" id="CP002684">
    <property type="protein sequence ID" value="AEE35258.1"/>
    <property type="molecule type" value="Genomic_DNA"/>
</dbReference>
<dbReference type="EMBL" id="AY050810">
    <property type="protein sequence ID" value="AAK92745.1"/>
    <property type="molecule type" value="mRNA"/>
</dbReference>
<dbReference type="EMBL" id="BT005795">
    <property type="protein sequence ID" value="AAO64197.1"/>
    <property type="molecule type" value="mRNA"/>
</dbReference>
<dbReference type="EMBL" id="AK319090">
    <property type="protein sequence ID" value="BAH57205.1"/>
    <property type="molecule type" value="mRNA"/>
</dbReference>
<dbReference type="PIR" id="E96742">
    <property type="entry name" value="E96742"/>
</dbReference>
<dbReference type="RefSeq" id="NP_565030.1">
    <molecule id="Q84TH5-1"/>
    <property type="nucleotide sequence ID" value="NM_105854.1"/>
</dbReference>
<dbReference type="PDB" id="8I38">
    <property type="method" value="EM"/>
    <property type="resolution" value="2.90 A"/>
    <property type="chains" value="A/B=1-662"/>
</dbReference>
<dbReference type="PDB" id="8I39">
    <property type="method" value="EM"/>
    <property type="resolution" value="2.85 A"/>
    <property type="chains" value="A/B=1-662"/>
</dbReference>
<dbReference type="PDB" id="8I3A">
    <property type="method" value="EM"/>
    <property type="resolution" value="3.04 A"/>
    <property type="chains" value="A/B=1-662"/>
</dbReference>
<dbReference type="PDB" id="8I3B">
    <property type="method" value="EM"/>
    <property type="resolution" value="3.08 A"/>
    <property type="chains" value="A/B=1-662"/>
</dbReference>
<dbReference type="PDB" id="8I3C">
    <property type="method" value="EM"/>
    <property type="resolution" value="2.85 A"/>
    <property type="chains" value="A/B=1-662"/>
</dbReference>
<dbReference type="PDB" id="8I3D">
    <property type="method" value="EM"/>
    <property type="resolution" value="2.81 A"/>
    <property type="chains" value="A/B=1-662"/>
</dbReference>
<dbReference type="PDB" id="8IWJ">
    <property type="method" value="EM"/>
    <property type="resolution" value="3.00 A"/>
    <property type="chains" value="A/B=1-662"/>
</dbReference>
<dbReference type="PDB" id="8IWK">
    <property type="method" value="EM"/>
    <property type="resolution" value="3.00 A"/>
    <property type="chains" value="A/C=1-662"/>
</dbReference>
<dbReference type="PDB" id="8IWN">
    <property type="method" value="EM"/>
    <property type="resolution" value="3.00 A"/>
    <property type="chains" value="A/C=1-662"/>
</dbReference>
<dbReference type="PDB" id="8K0X">
    <property type="method" value="EM"/>
    <property type="resolution" value="3.20 A"/>
    <property type="chains" value="A/C=1-662"/>
</dbReference>
<dbReference type="PDB" id="8K0Z">
    <property type="method" value="EM"/>
    <property type="resolution" value="3.70 A"/>
    <property type="chains" value="A/B=1-662"/>
</dbReference>
<dbReference type="PDB" id="8WAM">
    <property type="method" value="EM"/>
    <property type="resolution" value="3.23 A"/>
    <property type="chains" value="A/B=1-662"/>
</dbReference>
<dbReference type="PDB" id="8WBA">
    <property type="method" value="EM"/>
    <property type="resolution" value="3.10 A"/>
    <property type="chains" value="A/B=1-662"/>
</dbReference>
<dbReference type="PDB" id="8WBX">
    <property type="method" value="EM"/>
    <property type="resolution" value="3.23 A"/>
    <property type="chains" value="A/B=1-662"/>
</dbReference>
<dbReference type="PDB" id="8WD6">
    <property type="method" value="EM"/>
    <property type="resolution" value="2.87 A"/>
    <property type="chains" value="A/B=1-662"/>
</dbReference>
<dbReference type="PDBsum" id="8I38"/>
<dbReference type="PDBsum" id="8I39"/>
<dbReference type="PDBsum" id="8I3A"/>
<dbReference type="PDBsum" id="8I3B"/>
<dbReference type="PDBsum" id="8I3C"/>
<dbReference type="PDBsum" id="8I3D"/>
<dbReference type="PDBsum" id="8IWJ"/>
<dbReference type="PDBsum" id="8IWK"/>
<dbReference type="PDBsum" id="8IWN"/>
<dbReference type="PDBsum" id="8K0X"/>
<dbReference type="PDBsum" id="8K0Z"/>
<dbReference type="PDBsum" id="8WAM"/>
<dbReference type="PDBsum" id="8WBA"/>
<dbReference type="PDBsum" id="8WBX"/>
<dbReference type="PDBsum" id="8WD6"/>
<dbReference type="EMDB" id="EMD-35145"/>
<dbReference type="EMDB" id="EMD-35146"/>
<dbReference type="EMDB" id="EMD-35147"/>
<dbReference type="EMDB" id="EMD-35148"/>
<dbReference type="EMDB" id="EMD-35149"/>
<dbReference type="EMDB" id="EMD-35150"/>
<dbReference type="EMDB" id="EMD-35768"/>
<dbReference type="EMDB" id="EMD-35769"/>
<dbReference type="EMDB" id="EMD-35774"/>
<dbReference type="EMDB" id="EMD-36780"/>
<dbReference type="EMDB" id="EMD-36781"/>
<dbReference type="EMDB" id="EMD-37397"/>
<dbReference type="EMDB" id="EMD-37418"/>
<dbReference type="EMDB" id="EMD-37426"/>
<dbReference type="EMDB" id="EMD-37455"/>
<dbReference type="SMR" id="Q84TH5"/>
<dbReference type="FunCoup" id="Q84TH5">
    <property type="interactions" value="570"/>
</dbReference>
<dbReference type="STRING" id="3702.Q84TH5"/>
<dbReference type="TCDB" id="3.A.1.204.28">
    <property type="family name" value="the atp-binding cassette (abc) superfamily"/>
</dbReference>
<dbReference type="GlyCosmos" id="Q84TH5">
    <property type="glycosylation" value="2 sites, No reported glycans"/>
</dbReference>
<dbReference type="GlyGen" id="Q84TH5">
    <property type="glycosylation" value="2 sites"/>
</dbReference>
<dbReference type="PaxDb" id="3702-AT1G71960.1"/>
<dbReference type="ProteomicsDB" id="243302">
    <molecule id="Q84TH5-1"/>
</dbReference>
<dbReference type="EnsemblPlants" id="AT1G71960.1">
    <molecule id="Q84TH5-1"/>
    <property type="protein sequence ID" value="AT1G71960.1"/>
    <property type="gene ID" value="AT1G71960"/>
</dbReference>
<dbReference type="GeneID" id="843527"/>
<dbReference type="Gramene" id="AT1G71960.1">
    <molecule id="Q84TH5-1"/>
    <property type="protein sequence ID" value="AT1G71960.1"/>
    <property type="gene ID" value="AT1G71960"/>
</dbReference>
<dbReference type="KEGG" id="ath:AT1G71960"/>
<dbReference type="Araport" id="AT1G71960"/>
<dbReference type="TAIR" id="AT1G71960">
    <property type="gene designation" value="ABCG25"/>
</dbReference>
<dbReference type="eggNOG" id="KOG0061">
    <property type="taxonomic scope" value="Eukaryota"/>
</dbReference>
<dbReference type="HOGENOM" id="CLU_000604_57_10_1"/>
<dbReference type="InParanoid" id="Q84TH5"/>
<dbReference type="OMA" id="MPRHLTY"/>
<dbReference type="PhylomeDB" id="Q84TH5"/>
<dbReference type="PRO" id="PR:Q84TH5"/>
<dbReference type="Proteomes" id="UP000006548">
    <property type="component" value="Chromosome 1"/>
</dbReference>
<dbReference type="ExpressionAtlas" id="Q84TH5">
    <property type="expression patterns" value="baseline and differential"/>
</dbReference>
<dbReference type="GO" id="GO:0005886">
    <property type="term" value="C:plasma membrane"/>
    <property type="evidence" value="ECO:0000314"/>
    <property type="project" value="TAIR"/>
</dbReference>
<dbReference type="GO" id="GO:0140359">
    <property type="term" value="F:ABC-type transporter activity"/>
    <property type="evidence" value="ECO:0007669"/>
    <property type="project" value="InterPro"/>
</dbReference>
<dbReference type="GO" id="GO:0005524">
    <property type="term" value="F:ATP binding"/>
    <property type="evidence" value="ECO:0007669"/>
    <property type="project" value="UniProtKB-KW"/>
</dbReference>
<dbReference type="GO" id="GO:0016887">
    <property type="term" value="F:ATP hydrolysis activity"/>
    <property type="evidence" value="ECO:0007669"/>
    <property type="project" value="InterPro"/>
</dbReference>
<dbReference type="GO" id="GO:0042626">
    <property type="term" value="F:ATPase-coupled transmembrane transporter activity"/>
    <property type="evidence" value="ECO:0000314"/>
    <property type="project" value="UniProtKB"/>
</dbReference>
<dbReference type="GO" id="GO:0015562">
    <property type="term" value="F:efflux transmembrane transporter activity"/>
    <property type="evidence" value="ECO:0000314"/>
    <property type="project" value="UniProtKB"/>
</dbReference>
<dbReference type="GO" id="GO:0080168">
    <property type="term" value="P:abscisic acid transport"/>
    <property type="evidence" value="ECO:0000314"/>
    <property type="project" value="UniProtKB"/>
</dbReference>
<dbReference type="GO" id="GO:0009738">
    <property type="term" value="P:abscisic acid-activated signaling pathway"/>
    <property type="evidence" value="ECO:0000314"/>
    <property type="project" value="UniProtKB"/>
</dbReference>
<dbReference type="GO" id="GO:0140352">
    <property type="term" value="P:export from cell"/>
    <property type="evidence" value="ECO:0000314"/>
    <property type="project" value="UniProtKB"/>
</dbReference>
<dbReference type="GO" id="GO:0010496">
    <property type="term" value="P:intercellular transport"/>
    <property type="evidence" value="ECO:0000314"/>
    <property type="project" value="UniProtKB"/>
</dbReference>
<dbReference type="GO" id="GO:0048581">
    <property type="term" value="P:negative regulation of post-embryonic development"/>
    <property type="evidence" value="ECO:0000315"/>
    <property type="project" value="UniProtKB"/>
</dbReference>
<dbReference type="GO" id="GO:0009737">
    <property type="term" value="P:response to abscisic acid"/>
    <property type="evidence" value="ECO:0000315"/>
    <property type="project" value="TAIR"/>
</dbReference>
<dbReference type="GO" id="GO:0009409">
    <property type="term" value="P:response to cold"/>
    <property type="evidence" value="ECO:0000270"/>
    <property type="project" value="UniProtKB"/>
</dbReference>
<dbReference type="GO" id="GO:0009408">
    <property type="term" value="P:response to heat"/>
    <property type="evidence" value="ECO:0000270"/>
    <property type="project" value="UniProtKB"/>
</dbReference>
<dbReference type="GO" id="GO:0055085">
    <property type="term" value="P:transmembrane transport"/>
    <property type="evidence" value="ECO:0000314"/>
    <property type="project" value="UniProtKB"/>
</dbReference>
<dbReference type="CDD" id="cd03213">
    <property type="entry name" value="ABCG_EPDR"/>
    <property type="match status" value="1"/>
</dbReference>
<dbReference type="FunFam" id="3.40.50.300:FF:000337">
    <property type="entry name" value="ABC transporter G family member 22"/>
    <property type="match status" value="1"/>
</dbReference>
<dbReference type="Gene3D" id="3.40.50.300">
    <property type="entry name" value="P-loop containing nucleotide triphosphate hydrolases"/>
    <property type="match status" value="1"/>
</dbReference>
<dbReference type="InterPro" id="IPR003593">
    <property type="entry name" value="AAA+_ATPase"/>
</dbReference>
<dbReference type="InterPro" id="IPR013525">
    <property type="entry name" value="ABC2_TM"/>
</dbReference>
<dbReference type="InterPro" id="IPR003439">
    <property type="entry name" value="ABC_transporter-like_ATP-bd"/>
</dbReference>
<dbReference type="InterPro" id="IPR043926">
    <property type="entry name" value="ABCG_dom"/>
</dbReference>
<dbReference type="InterPro" id="IPR050352">
    <property type="entry name" value="ABCG_transporters"/>
</dbReference>
<dbReference type="InterPro" id="IPR027417">
    <property type="entry name" value="P-loop_NTPase"/>
</dbReference>
<dbReference type="PANTHER" id="PTHR48041:SF56">
    <property type="entry name" value="ABC TRANSPORTER G FAMILY MEMBER 25"/>
    <property type="match status" value="1"/>
</dbReference>
<dbReference type="PANTHER" id="PTHR48041">
    <property type="entry name" value="ABC TRANSPORTER G FAMILY MEMBER 28"/>
    <property type="match status" value="1"/>
</dbReference>
<dbReference type="Pfam" id="PF01061">
    <property type="entry name" value="ABC2_membrane"/>
    <property type="match status" value="1"/>
</dbReference>
<dbReference type="Pfam" id="PF19055">
    <property type="entry name" value="ABC2_membrane_7"/>
    <property type="match status" value="1"/>
</dbReference>
<dbReference type="Pfam" id="PF00005">
    <property type="entry name" value="ABC_tran"/>
    <property type="match status" value="1"/>
</dbReference>
<dbReference type="SMART" id="SM00382">
    <property type="entry name" value="AAA"/>
    <property type="match status" value="1"/>
</dbReference>
<dbReference type="SUPFAM" id="SSF52540">
    <property type="entry name" value="P-loop containing nucleoside triphosphate hydrolases"/>
    <property type="match status" value="1"/>
</dbReference>
<dbReference type="PROSITE" id="PS50893">
    <property type="entry name" value="ABC_TRANSPORTER_2"/>
    <property type="match status" value="1"/>
</dbReference>
<gene>
    <name evidence="10" type="primary">ABCG25</name>
    <name evidence="9" type="synonym">WBC26</name>
    <name evidence="14" type="ordered locus">At1g71960</name>
    <name evidence="15" type="ORF">F17M19.11</name>
</gene>
<accession>Q84TH5</accession>
<accession>C0Z3C6</accession>
<accession>Q949Y4</accession>
<accession>Q9C8W6</accession>
<evidence type="ECO:0000255" key="1"/>
<evidence type="ECO:0000255" key="2">
    <source>
        <dbReference type="PROSITE-ProRule" id="PRU00434"/>
    </source>
</evidence>
<evidence type="ECO:0000255" key="3">
    <source>
        <dbReference type="PROSITE-ProRule" id="PRU00498"/>
    </source>
</evidence>
<evidence type="ECO:0000256" key="4">
    <source>
        <dbReference type="SAM" id="MobiDB-lite"/>
    </source>
</evidence>
<evidence type="ECO:0000269" key="5">
    <source>
    </source>
</evidence>
<evidence type="ECO:0000269" key="6">
    <source>
    </source>
</evidence>
<evidence type="ECO:0000269" key="7">
    <source>
    </source>
</evidence>
<evidence type="ECO:0000269" key="8">
    <source>
    </source>
</evidence>
<evidence type="ECO:0000303" key="9">
    <source>
    </source>
</evidence>
<evidence type="ECO:0000303" key="10">
    <source>
    </source>
</evidence>
<evidence type="ECO:0000303" key="11">
    <source>
    </source>
</evidence>
<evidence type="ECO:0000303" key="12">
    <source>
    </source>
</evidence>
<evidence type="ECO:0000305" key="13"/>
<evidence type="ECO:0000312" key="14">
    <source>
        <dbReference type="Araport" id="AT1G71960"/>
    </source>
</evidence>
<evidence type="ECO:0000312" key="15">
    <source>
        <dbReference type="EMBL" id="AAG52231.1"/>
    </source>
</evidence>
<evidence type="ECO:0007829" key="16">
    <source>
        <dbReference type="PDB" id="8I38"/>
    </source>
</evidence>
<evidence type="ECO:0007829" key="17">
    <source>
        <dbReference type="PDB" id="8I39"/>
    </source>
</evidence>
<evidence type="ECO:0007829" key="18">
    <source>
        <dbReference type="PDB" id="8I3D"/>
    </source>
</evidence>
<evidence type="ECO:0007829" key="19">
    <source>
        <dbReference type="PDB" id="8IWJ"/>
    </source>
</evidence>
<evidence type="ECO:0007829" key="20">
    <source>
        <dbReference type="PDB" id="8WAM"/>
    </source>
</evidence>
<evidence type="ECO:0007829" key="21">
    <source>
        <dbReference type="PDB" id="8WBA"/>
    </source>
</evidence>
<protein>
    <recommendedName>
        <fullName evidence="10">ABC transporter G family member 25</fullName>
        <shortName evidence="10">ABC transporter ABCG.25</shortName>
        <shortName evidence="10">AtABCG25</shortName>
    </recommendedName>
    <alternativeName>
        <fullName evidence="9">White-brown complex homolog protein 26</fullName>
        <shortName evidence="9">AtWBC26</shortName>
    </alternativeName>
</protein>
<sequence length="662" mass="72903">MSAFDGVENQMNGPDSSPRLSQDPREPRSLLSSSCFPITLKFVDVCYRVKIHGMSNDSCNIKKLLGLKQKPSDETRSTEERTILSGVTGMISPGEFMAVLGPSGSGKSTLLNAVAGRLHGSNLTGKILINDGKITKQTLKRTGFVAQDDLLYPHLTVRETLVFVALLRLPRSLTRDVKLRAAESVISELGLTKCENTVVGNTFIRGISGGERKRVSIAHELLINPSLLVLDEPTSGLDATAALRLVQTLAGLAHGKGKTVVTSIHQPSSRVFQMFDTVLLLSEGKCLFVGKGRDAMAYFESVGFSPAFPMNPADFLLDLANGVCQTDGVTEREKPNVRQTLVTAYDTLLAPQVKTCIEVSHFPQDNARFVKTRVNGGGITTCIATWFSQLCILLHRLLKERRHESFDLLRIFQVVAASILCGLMWWHSDYRDVHDRLGLLFFISIFWGVLPSFNAVFTFPQERAIFTRERASGMYTLSSYFMAHVLGSLSMELVLPASFLTFTYWMVYLRPGIVPFLLTLSVLLLYVLASQGLGLALGAAIMDAKKASTIVTVTMLAFVLTGGYYVNKVPSGMVWMKYVSTTFYCYRLLVAIQYGSGEEILRMLGCDSKGKQGASAATSAGCRFVEEEVIGDVGMWTSVGVLFLMFFGYRVLAYLALRRIKH</sequence>
<organism>
    <name type="scientific">Arabidopsis thaliana</name>
    <name type="common">Mouse-ear cress</name>
    <dbReference type="NCBI Taxonomy" id="3702"/>
    <lineage>
        <taxon>Eukaryota</taxon>
        <taxon>Viridiplantae</taxon>
        <taxon>Streptophyta</taxon>
        <taxon>Embryophyta</taxon>
        <taxon>Tracheophyta</taxon>
        <taxon>Spermatophyta</taxon>
        <taxon>Magnoliopsida</taxon>
        <taxon>eudicotyledons</taxon>
        <taxon>Gunneridae</taxon>
        <taxon>Pentapetalae</taxon>
        <taxon>rosids</taxon>
        <taxon>malvids</taxon>
        <taxon>Brassicales</taxon>
        <taxon>Brassicaceae</taxon>
        <taxon>Camelineae</taxon>
        <taxon>Arabidopsis</taxon>
    </lineage>
</organism>
<reference key="1">
    <citation type="journal article" date="2000" name="Nature">
        <title>Sequence and analysis of chromosome 1 of the plant Arabidopsis thaliana.</title>
        <authorList>
            <person name="Theologis A."/>
            <person name="Ecker J.R."/>
            <person name="Palm C.J."/>
            <person name="Federspiel N.A."/>
            <person name="Kaul S."/>
            <person name="White O."/>
            <person name="Alonso J."/>
            <person name="Altafi H."/>
            <person name="Araujo R."/>
            <person name="Bowman C.L."/>
            <person name="Brooks S.Y."/>
            <person name="Buehler E."/>
            <person name="Chan A."/>
            <person name="Chao Q."/>
            <person name="Chen H."/>
            <person name="Cheuk R.F."/>
            <person name="Chin C.W."/>
            <person name="Chung M.K."/>
            <person name="Conn L."/>
            <person name="Conway A.B."/>
            <person name="Conway A.R."/>
            <person name="Creasy T.H."/>
            <person name="Dewar K."/>
            <person name="Dunn P."/>
            <person name="Etgu P."/>
            <person name="Feldblyum T.V."/>
            <person name="Feng J.-D."/>
            <person name="Fong B."/>
            <person name="Fujii C.Y."/>
            <person name="Gill J.E."/>
            <person name="Goldsmith A.D."/>
            <person name="Haas B."/>
            <person name="Hansen N.F."/>
            <person name="Hughes B."/>
            <person name="Huizar L."/>
            <person name="Hunter J.L."/>
            <person name="Jenkins J."/>
            <person name="Johnson-Hopson C."/>
            <person name="Khan S."/>
            <person name="Khaykin E."/>
            <person name="Kim C.J."/>
            <person name="Koo H.L."/>
            <person name="Kremenetskaia I."/>
            <person name="Kurtz D.B."/>
            <person name="Kwan A."/>
            <person name="Lam B."/>
            <person name="Langin-Hooper S."/>
            <person name="Lee A."/>
            <person name="Lee J.M."/>
            <person name="Lenz C.A."/>
            <person name="Li J.H."/>
            <person name="Li Y.-P."/>
            <person name="Lin X."/>
            <person name="Liu S.X."/>
            <person name="Liu Z.A."/>
            <person name="Luros J.S."/>
            <person name="Maiti R."/>
            <person name="Marziali A."/>
            <person name="Militscher J."/>
            <person name="Miranda M."/>
            <person name="Nguyen M."/>
            <person name="Nierman W.C."/>
            <person name="Osborne B.I."/>
            <person name="Pai G."/>
            <person name="Peterson J."/>
            <person name="Pham P.K."/>
            <person name="Rizzo M."/>
            <person name="Rooney T."/>
            <person name="Rowley D."/>
            <person name="Sakano H."/>
            <person name="Salzberg S.L."/>
            <person name="Schwartz J.R."/>
            <person name="Shinn P."/>
            <person name="Southwick A.M."/>
            <person name="Sun H."/>
            <person name="Tallon L.J."/>
            <person name="Tambunga G."/>
            <person name="Toriumi M.J."/>
            <person name="Town C.D."/>
            <person name="Utterback T."/>
            <person name="Van Aken S."/>
            <person name="Vaysberg M."/>
            <person name="Vysotskaia V.S."/>
            <person name="Walker M."/>
            <person name="Wu D."/>
            <person name="Yu G."/>
            <person name="Fraser C.M."/>
            <person name="Venter J.C."/>
            <person name="Davis R.W."/>
        </authorList>
    </citation>
    <scope>NUCLEOTIDE SEQUENCE [LARGE SCALE GENOMIC DNA]</scope>
    <source>
        <strain>cv. Columbia</strain>
    </source>
</reference>
<reference key="2">
    <citation type="journal article" date="2017" name="Plant J.">
        <title>Araport11: a complete reannotation of the Arabidopsis thaliana reference genome.</title>
        <authorList>
            <person name="Cheng C.Y."/>
            <person name="Krishnakumar V."/>
            <person name="Chan A.P."/>
            <person name="Thibaud-Nissen F."/>
            <person name="Schobel S."/>
            <person name="Town C.D."/>
        </authorList>
    </citation>
    <scope>GENOME REANNOTATION</scope>
    <source>
        <strain>cv. Columbia</strain>
    </source>
</reference>
<reference key="3">
    <citation type="journal article" date="2003" name="Science">
        <title>Empirical analysis of transcriptional activity in the Arabidopsis genome.</title>
        <authorList>
            <person name="Yamada K."/>
            <person name="Lim J."/>
            <person name="Dale J.M."/>
            <person name="Chen H."/>
            <person name="Shinn P."/>
            <person name="Palm C.J."/>
            <person name="Southwick A.M."/>
            <person name="Wu H.C."/>
            <person name="Kim C.J."/>
            <person name="Nguyen M."/>
            <person name="Pham P.K."/>
            <person name="Cheuk R.F."/>
            <person name="Karlin-Newmann G."/>
            <person name="Liu S.X."/>
            <person name="Lam B."/>
            <person name="Sakano H."/>
            <person name="Wu T."/>
            <person name="Yu G."/>
            <person name="Miranda M."/>
            <person name="Quach H.L."/>
            <person name="Tripp M."/>
            <person name="Chang C.H."/>
            <person name="Lee J.M."/>
            <person name="Toriumi M.J."/>
            <person name="Chan M.M."/>
            <person name="Tang C.C."/>
            <person name="Onodera C.S."/>
            <person name="Deng J.M."/>
            <person name="Akiyama K."/>
            <person name="Ansari Y."/>
            <person name="Arakawa T."/>
            <person name="Banh J."/>
            <person name="Banno F."/>
            <person name="Bowser L."/>
            <person name="Brooks S.Y."/>
            <person name="Carninci P."/>
            <person name="Chao Q."/>
            <person name="Choy N."/>
            <person name="Enju A."/>
            <person name="Goldsmith A.D."/>
            <person name="Gurjal M."/>
            <person name="Hansen N.F."/>
            <person name="Hayashizaki Y."/>
            <person name="Johnson-Hopson C."/>
            <person name="Hsuan V.W."/>
            <person name="Iida K."/>
            <person name="Karnes M."/>
            <person name="Khan S."/>
            <person name="Koesema E."/>
            <person name="Ishida J."/>
            <person name="Jiang P.X."/>
            <person name="Jones T."/>
            <person name="Kawai J."/>
            <person name="Kamiya A."/>
            <person name="Meyers C."/>
            <person name="Nakajima M."/>
            <person name="Narusaka M."/>
            <person name="Seki M."/>
            <person name="Sakurai T."/>
            <person name="Satou M."/>
            <person name="Tamse R."/>
            <person name="Vaysberg M."/>
            <person name="Wallender E.K."/>
            <person name="Wong C."/>
            <person name="Yamamura Y."/>
            <person name="Yuan S."/>
            <person name="Shinozaki K."/>
            <person name="Davis R.W."/>
            <person name="Theologis A."/>
            <person name="Ecker J.R."/>
        </authorList>
    </citation>
    <scope>NUCLEOTIDE SEQUENCE [LARGE SCALE MRNA] (ISOFORM 1)</scope>
    <source>
        <strain>cv. Columbia</strain>
    </source>
</reference>
<reference key="4">
    <citation type="journal article" date="2009" name="DNA Res.">
        <title>Analysis of multiple occurrences of alternative splicing events in Arabidopsis thaliana using novel sequenced full-length cDNAs.</title>
        <authorList>
            <person name="Iida K."/>
            <person name="Fukami-Kobayashi K."/>
            <person name="Toyoda A."/>
            <person name="Sakaki Y."/>
            <person name="Kobayashi M."/>
            <person name="Seki M."/>
            <person name="Shinozaki K."/>
        </authorList>
    </citation>
    <scope>NUCLEOTIDE SEQUENCE [LARGE SCALE MRNA] (ISOFORM 2)</scope>
    <source>
        <strain>cv. Columbia</strain>
    </source>
</reference>
<reference key="5">
    <citation type="journal article" date="2001" name="J. Biol. Chem.">
        <title>The Arabidopsis thaliana ABC protein superfamily, a complete inventory.</title>
        <authorList>
            <person name="Sanchez-Fernandez R."/>
            <person name="Davies T.G."/>
            <person name="Coleman J.O."/>
            <person name="Rea P.A."/>
        </authorList>
    </citation>
    <scope>GENE FAMILY</scope>
    <scope>NOMENCLATURE</scope>
</reference>
<reference key="6">
    <citation type="journal article" date="2008" name="Trends Plant Sci.">
        <title>Plant ABC proteins - a unified nomenclature and updated inventory.</title>
        <authorList>
            <person name="Verrier P.J."/>
            <person name="Bird D."/>
            <person name="Burla B."/>
            <person name="Dassa E."/>
            <person name="Forestier C."/>
            <person name="Geisler M."/>
            <person name="Klein M."/>
            <person name="Kolukisaoglu H.U."/>
            <person name="Lee Y."/>
            <person name="Martinoia E."/>
            <person name="Murphy A."/>
            <person name="Rea P.A."/>
            <person name="Samuels L."/>
            <person name="Schulz B."/>
            <person name="Spalding E.J."/>
            <person name="Yazaki K."/>
            <person name="Theodoulou F.L."/>
        </authorList>
    </citation>
    <scope>GENE FAMILY</scope>
    <scope>NOMENCLATURE</scope>
</reference>
<reference key="7">
    <citation type="journal article" date="2010" name="Plant Signal. Behav.">
        <title>ABA transport factors found in Arabidopsis ABC transporters.</title>
        <authorList>
            <person name="Kuromori T."/>
            <person name="Shinozaki K."/>
        </authorList>
    </citation>
    <scope>REVIEW ON ABSCISIC ACID HOMEOSTASIS</scope>
</reference>
<reference key="8">
    <citation type="journal article" date="2010" name="Proc. Natl. Acad. Sci. U.S.A.">
        <title>ABC transporter AtABCG25 is involved in abscisic acid transport and responses.</title>
        <authorList>
            <person name="Kuromori T."/>
            <person name="Miyaji T."/>
            <person name="Yabuuchi H."/>
            <person name="Shimizu H."/>
            <person name="Sugimoto E."/>
            <person name="Kamiya A."/>
            <person name="Moriyama Y."/>
            <person name="Shinozaki K."/>
        </authorList>
    </citation>
    <scope>FUNCTION</scope>
    <scope>DISRUPTION PHENOTYPE</scope>
    <scope>SUBCELLULAR LOCATION</scope>
    <scope>TISSUE SPECIFICITY</scope>
    <scope>INDUCTION BY ABSCISIC ACID</scope>
    <scope>BIOPHYSICOCHEMICAL PROPERTIES</scope>
    <scope>ACTIVITY REGULATION</scope>
    <scope>CATALYTIC ACTIVITY</scope>
    <source>
        <strain>cv. Landsberg erecta</strain>
        <strain>cv. No-0</strain>
    </source>
</reference>
<reference key="9">
    <citation type="journal article" date="2012" name="Plant Sci.">
        <title>Transcriptional response of abscisic acid (ABA) metabolism and transport to cold and heat stress applied at the reproductive stage of development in Arabidopsis thaliana.</title>
        <authorList>
            <person name="Baron K.N."/>
            <person name="Schroeder D.F."/>
            <person name="Stasolla C."/>
        </authorList>
    </citation>
    <scope>INDUCTION BY STRESS</scope>
    <scope>TISSUE SPECIFICITY</scope>
</reference>
<reference key="10">
    <citation type="journal article" date="2014" name="Plant Physiol.">
        <title>Intertissue signal transfer of abscisic acid from vascular cells to guard cells.</title>
        <authorList>
            <person name="Kuromori T."/>
            <person name="Sugimoto E."/>
            <person name="Shinozaki K."/>
        </authorList>
    </citation>
    <scope>FUNCTION</scope>
    <scope>CATALYTIC ACTIVITY</scope>
    <scope>TISSUE SPECIFICITY</scope>
</reference>
<reference key="11">
    <citation type="journal article" date="2015" name="Biochem. Soc. Trans.">
        <title>The role of ABCG-type ABC transporters in phytohormone transport.</title>
        <authorList>
            <person name="Borghi L."/>
            <person name="Kang J."/>
            <person name="Ko D."/>
            <person name="Lee Y."/>
            <person name="Martinoia E."/>
        </authorList>
    </citation>
    <scope>REVIEW ON PHYTOHORMONE TRANSPORT</scope>
</reference>
<reference key="12">
    <citation type="journal article" date="2015" name="Nat. Commun.">
        <title>Abscisic acid transporters cooperate to control seed germination.</title>
        <authorList>
            <person name="Kang J."/>
            <person name="Yim S."/>
            <person name="Choi H."/>
            <person name="Kim A."/>
            <person name="Lee K.P."/>
            <person name="Lopez-Molina L."/>
            <person name="Martinoia E."/>
            <person name="Lee Y."/>
        </authorList>
    </citation>
    <scope>FUNCTION</scope>
    <scope>CATALYTIC ACTIVITY</scope>
    <scope>TISSUE SPECIFICITY</scope>
    <source>
        <strain>cv. Columbia</strain>
    </source>
</reference>
<feature type="chain" id="PRO_0000240697" description="ABC transporter G family member 25">
    <location>
        <begin position="1"/>
        <end position="662"/>
    </location>
</feature>
<feature type="transmembrane region" description="Helical" evidence="1">
    <location>
        <begin position="374"/>
        <end position="394"/>
    </location>
</feature>
<feature type="transmembrane region" description="Helical" evidence="1">
    <location>
        <begin position="406"/>
        <end position="426"/>
    </location>
</feature>
<feature type="transmembrane region" description="Helical" evidence="1">
    <location>
        <begin position="437"/>
        <end position="457"/>
    </location>
</feature>
<feature type="transmembrane region" description="Helical" evidence="1">
    <location>
        <begin position="489"/>
        <end position="509"/>
    </location>
</feature>
<feature type="transmembrane region" description="Helical" evidence="1">
    <location>
        <begin position="522"/>
        <end position="542"/>
    </location>
</feature>
<feature type="transmembrane region" description="Helical" evidence="1">
    <location>
        <begin position="547"/>
        <end position="567"/>
    </location>
</feature>
<feature type="transmembrane region" description="Helical" evidence="1">
    <location>
        <begin position="629"/>
        <end position="649"/>
    </location>
</feature>
<feature type="domain" description="ABC transporter" evidence="2">
    <location>
        <begin position="69"/>
        <end position="308"/>
    </location>
</feature>
<feature type="domain" description="ABC transmembrane type-2" evidence="1">
    <location>
        <begin position="388"/>
        <end position="594"/>
    </location>
</feature>
<feature type="region of interest" description="Disordered" evidence="4">
    <location>
        <begin position="1"/>
        <end position="30"/>
    </location>
</feature>
<feature type="compositionally biased region" description="Polar residues" evidence="4">
    <location>
        <begin position="9"/>
        <end position="20"/>
    </location>
</feature>
<feature type="binding site" evidence="2">
    <location>
        <begin position="101"/>
        <end position="108"/>
    </location>
    <ligand>
        <name>ATP</name>
        <dbReference type="ChEBI" id="CHEBI:30616"/>
    </ligand>
</feature>
<feature type="glycosylation site" description="N-linked (GlcNAc...) asparagine" evidence="3">
    <location>
        <position position="56"/>
    </location>
</feature>
<feature type="glycosylation site" description="N-linked (GlcNAc...) asparagine" evidence="3">
    <location>
        <position position="122"/>
    </location>
</feature>
<feature type="splice variant" id="VSP_060644" description="In isoform 2.">
    <location>
        <begin position="1"/>
        <end position="53"/>
    </location>
</feature>
<feature type="sequence conflict" description="In Ref. 4; BAH57205." evidence="13" ref="4">
    <original>L</original>
    <variation>F</variation>
    <location>
        <position position="118"/>
    </location>
</feature>
<feature type="sequence conflict" description="In Ref. 3; AAK92745." evidence="13" ref="3">
    <original>L</original>
    <variation>I</variation>
    <location>
        <position position="179"/>
    </location>
</feature>
<feature type="strand" evidence="18">
    <location>
        <begin position="40"/>
        <end position="49"/>
    </location>
</feature>
<feature type="strand" evidence="18">
    <location>
        <begin position="81"/>
        <end position="91"/>
    </location>
</feature>
<feature type="strand" evidence="18">
    <location>
        <begin position="95"/>
        <end position="100"/>
    </location>
</feature>
<feature type="helix" evidence="18">
    <location>
        <begin position="107"/>
        <end position="115"/>
    </location>
</feature>
<feature type="strand" evidence="18">
    <location>
        <begin position="120"/>
        <end position="132"/>
    </location>
</feature>
<feature type="strand" evidence="18">
    <location>
        <begin position="136"/>
        <end position="138"/>
    </location>
</feature>
<feature type="strand" evidence="18">
    <location>
        <begin position="141"/>
        <end position="145"/>
    </location>
</feature>
<feature type="strand" evidence="19">
    <location>
        <begin position="153"/>
        <end position="156"/>
    </location>
</feature>
<feature type="helix" evidence="18">
    <location>
        <begin position="157"/>
        <end position="168"/>
    </location>
</feature>
<feature type="strand" evidence="16">
    <location>
        <begin position="171"/>
        <end position="173"/>
    </location>
</feature>
<feature type="helix" evidence="18">
    <location>
        <begin position="175"/>
        <end position="180"/>
    </location>
</feature>
<feature type="helix" evidence="18">
    <location>
        <begin position="183"/>
        <end position="186"/>
    </location>
</feature>
<feature type="turn" evidence="18">
    <location>
        <begin position="187"/>
        <end position="190"/>
    </location>
</feature>
<feature type="turn" evidence="18">
    <location>
        <begin position="193"/>
        <end position="196"/>
    </location>
</feature>
<feature type="strand" evidence="18">
    <location>
        <begin position="202"/>
        <end position="204"/>
    </location>
</feature>
<feature type="helix" evidence="18">
    <location>
        <begin position="209"/>
        <end position="220"/>
    </location>
</feature>
<feature type="strand" evidence="18">
    <location>
        <begin position="221"/>
        <end position="223"/>
    </location>
</feature>
<feature type="strand" evidence="18">
    <location>
        <begin position="226"/>
        <end position="232"/>
    </location>
</feature>
<feature type="turn" evidence="18">
    <location>
        <begin position="233"/>
        <end position="236"/>
    </location>
</feature>
<feature type="helix" evidence="18">
    <location>
        <begin position="241"/>
        <end position="254"/>
    </location>
</feature>
<feature type="turn" evidence="20">
    <location>
        <begin position="255"/>
        <end position="257"/>
    </location>
</feature>
<feature type="strand" evidence="18">
    <location>
        <begin position="259"/>
        <end position="263"/>
    </location>
</feature>
<feature type="turn" evidence="18">
    <location>
        <begin position="269"/>
        <end position="271"/>
    </location>
</feature>
<feature type="helix" evidence="18">
    <location>
        <begin position="272"/>
        <end position="274"/>
    </location>
</feature>
<feature type="strand" evidence="18">
    <location>
        <begin position="276"/>
        <end position="280"/>
    </location>
</feature>
<feature type="strand" evidence="18">
    <location>
        <begin position="282"/>
        <end position="285"/>
    </location>
</feature>
<feature type="strand" evidence="18">
    <location>
        <begin position="288"/>
        <end position="291"/>
    </location>
</feature>
<feature type="helix" evidence="18">
    <location>
        <begin position="292"/>
        <end position="294"/>
    </location>
</feature>
<feature type="helix" evidence="18">
    <location>
        <begin position="295"/>
        <end position="300"/>
    </location>
</feature>
<feature type="turn" evidence="18">
    <location>
        <begin position="301"/>
        <end position="303"/>
    </location>
</feature>
<feature type="strand" evidence="17">
    <location>
        <begin position="307"/>
        <end position="309"/>
    </location>
</feature>
<feature type="helix" evidence="18">
    <location>
        <begin position="312"/>
        <end position="321"/>
    </location>
</feature>
<feature type="helix" evidence="18">
    <location>
        <begin position="338"/>
        <end position="348"/>
    </location>
</feature>
<feature type="helix" evidence="18">
    <location>
        <begin position="350"/>
        <end position="359"/>
    </location>
</feature>
<feature type="helix" evidence="18">
    <location>
        <begin position="379"/>
        <end position="400"/>
    </location>
</feature>
<feature type="helix" evidence="18">
    <location>
        <begin position="402"/>
        <end position="405"/>
    </location>
</feature>
<feature type="helix" evidence="18">
    <location>
        <begin position="408"/>
        <end position="424"/>
    </location>
</feature>
<feature type="turn" evidence="18">
    <location>
        <begin position="425"/>
        <end position="427"/>
    </location>
</feature>
<feature type="helix" evidence="18">
    <location>
        <begin position="433"/>
        <end position="454"/>
    </location>
</feature>
<feature type="helix" evidence="18">
    <location>
        <begin position="455"/>
        <end position="457"/>
    </location>
</feature>
<feature type="helix" evidence="18">
    <location>
        <begin position="458"/>
        <end position="461"/>
    </location>
</feature>
<feature type="helix" evidence="18">
    <location>
        <begin position="463"/>
        <end position="471"/>
    </location>
</feature>
<feature type="strand" evidence="21">
    <location>
        <begin position="473"/>
        <end position="475"/>
    </location>
</feature>
<feature type="helix" evidence="18">
    <location>
        <begin position="478"/>
        <end position="485"/>
    </location>
</feature>
<feature type="helix" evidence="18">
    <location>
        <begin position="488"/>
        <end position="491"/>
    </location>
</feature>
<feature type="helix" evidence="18">
    <location>
        <begin position="494"/>
        <end position="502"/>
    </location>
</feature>
<feature type="turn" evidence="18">
    <location>
        <begin position="503"/>
        <end position="508"/>
    </location>
</feature>
<feature type="helix" evidence="18">
    <location>
        <begin position="513"/>
        <end position="540"/>
    </location>
</feature>
<feature type="strand" evidence="20">
    <location>
        <begin position="541"/>
        <end position="543"/>
    </location>
</feature>
<feature type="helix" evidence="18">
    <location>
        <begin position="546"/>
        <end position="560"/>
    </location>
</feature>
<feature type="strand" evidence="18">
    <location>
        <begin position="562"/>
        <end position="565"/>
    </location>
</feature>
<feature type="helix" evidence="18">
    <location>
        <begin position="571"/>
        <end position="573"/>
    </location>
</feature>
<feature type="helix" evidence="18">
    <location>
        <begin position="576"/>
        <end position="578"/>
    </location>
</feature>
<feature type="helix" evidence="18">
    <location>
        <begin position="581"/>
        <end position="594"/>
    </location>
</feature>
<feature type="strand" evidence="18">
    <location>
        <begin position="596"/>
        <end position="600"/>
    </location>
</feature>
<feature type="turn" evidence="18">
    <location>
        <begin position="601"/>
        <end position="604"/>
    </location>
</feature>
<feature type="helix" evidence="18">
    <location>
        <begin position="623"/>
        <end position="625"/>
    </location>
</feature>
<feature type="strand" evidence="18">
    <location>
        <begin position="627"/>
        <end position="630"/>
    </location>
</feature>
<feature type="strand" evidence="16">
    <location>
        <begin position="631"/>
        <end position="633"/>
    </location>
</feature>
<feature type="helix" evidence="18">
    <location>
        <begin position="635"/>
        <end position="658"/>
    </location>
</feature>
<feature type="turn" evidence="18">
    <location>
        <begin position="659"/>
        <end position="661"/>
    </location>
</feature>
<keyword id="KW-0002">3D-structure</keyword>
<keyword id="KW-0938">Abscisic acid signaling pathway</keyword>
<keyword id="KW-0025">Alternative splicing</keyword>
<keyword id="KW-0067">ATP-binding</keyword>
<keyword id="KW-1003">Cell membrane</keyword>
<keyword id="KW-0325">Glycoprotein</keyword>
<keyword id="KW-0472">Membrane</keyword>
<keyword id="KW-0547">Nucleotide-binding</keyword>
<keyword id="KW-1185">Reference proteome</keyword>
<keyword id="KW-0346">Stress response</keyword>
<keyword id="KW-0812">Transmembrane</keyword>
<keyword id="KW-1133">Transmembrane helix</keyword>
<keyword id="KW-0813">Transport</keyword>